<organism>
    <name type="scientific">Citrus sinensis</name>
    <name type="common">Sweet orange</name>
    <name type="synonym">Citrus aurantium var. sinensis</name>
    <dbReference type="NCBI Taxonomy" id="2711"/>
    <lineage>
        <taxon>Eukaryota</taxon>
        <taxon>Viridiplantae</taxon>
        <taxon>Streptophyta</taxon>
        <taxon>Embryophyta</taxon>
        <taxon>Tracheophyta</taxon>
        <taxon>Spermatophyta</taxon>
        <taxon>Magnoliopsida</taxon>
        <taxon>eudicotyledons</taxon>
        <taxon>Gunneridae</taxon>
        <taxon>Pentapetalae</taxon>
        <taxon>rosids</taxon>
        <taxon>malvids</taxon>
        <taxon>Sapindales</taxon>
        <taxon>Rutaceae</taxon>
        <taxon>Aurantioideae</taxon>
        <taxon>Citrus</taxon>
    </lineage>
</organism>
<feature type="transit peptide" description="Chromoplast" evidence="2">
    <location>
        <begin position="1"/>
        <end status="unknown"/>
    </location>
</feature>
<feature type="chain" id="PRO_0000018437" description="Capsanthin/capsorubin synthase, chromoplastic">
    <location>
        <begin status="unknown"/>
        <end position="503"/>
    </location>
</feature>
<feature type="binding site" evidence="2">
    <location>
        <begin position="88"/>
        <end position="117"/>
    </location>
    <ligand>
        <name>NAD(+)</name>
        <dbReference type="ChEBI" id="CHEBI:57540"/>
    </ligand>
</feature>
<comment type="function">
    <text>Catalyzes the conversion of the ubiquitous 5,6-epoxycarotenoids, antheraxanthin and violaxanthin, into capsanthin and capsorubin, respectively.</text>
</comment>
<comment type="catalytic activity">
    <reaction>
        <text>all-trans-violaxanthin = all-trans-capsorubin</text>
        <dbReference type="Rhea" id="RHEA:21752"/>
        <dbReference type="ChEBI" id="CHEBI:3378"/>
        <dbReference type="ChEBI" id="CHEBI:35288"/>
        <dbReference type="EC" id="5.3.99.8"/>
    </reaction>
</comment>
<comment type="catalytic activity">
    <reaction>
        <text>all-trans-antheraxanthin = all-trans-capsanthin</text>
        <dbReference type="Rhea" id="RHEA:17373"/>
        <dbReference type="ChEBI" id="CHEBI:3375"/>
        <dbReference type="ChEBI" id="CHEBI:27867"/>
        <dbReference type="EC" id="5.3.99.8"/>
    </reaction>
</comment>
<comment type="pathway">
    <text>Carotenoid biosynthesis; capsanthin biosynthesis; capsanthin from antheraxanthin: step 1/1.</text>
</comment>
<comment type="pathway">
    <text>Carotenoid biosynthesis; capsorubin biosynthesis; capsorubin from violaxanthin: step 1/1.</text>
</comment>
<comment type="subcellular location">
    <subcellularLocation>
        <location evidence="1">Plastid</location>
        <location evidence="1">Chromoplast</location>
    </subcellularLocation>
</comment>
<comment type="similarity">
    <text evidence="3">Belongs to the lycopene cyclase family.</text>
</comment>
<dbReference type="EC" id="5.3.99.8"/>
<dbReference type="EMBL" id="AF169241">
    <property type="protein sequence ID" value="AAF18389.1"/>
    <property type="molecule type" value="Genomic_DNA"/>
</dbReference>
<dbReference type="SMR" id="Q9SEA0"/>
<dbReference type="PaxDb" id="2711-XP_006487912.1"/>
<dbReference type="eggNOG" id="ENOG502QQD7">
    <property type="taxonomic scope" value="Eukaryota"/>
</dbReference>
<dbReference type="UniPathway" id="UPA00806">
    <property type="reaction ID" value="UER00774"/>
</dbReference>
<dbReference type="UniPathway" id="UPA00807">
    <property type="reaction ID" value="UER00775"/>
</dbReference>
<dbReference type="GO" id="GO:0009509">
    <property type="term" value="C:chromoplast"/>
    <property type="evidence" value="ECO:0007669"/>
    <property type="project" value="UniProtKB-SubCell"/>
</dbReference>
<dbReference type="GO" id="GO:0052727">
    <property type="term" value="F:capsanthin synthase activity"/>
    <property type="evidence" value="ECO:0007669"/>
    <property type="project" value="RHEA"/>
</dbReference>
<dbReference type="GO" id="GO:0052728">
    <property type="term" value="F:capsorubin synthase activity"/>
    <property type="evidence" value="ECO:0007669"/>
    <property type="project" value="RHEA"/>
</dbReference>
<dbReference type="GO" id="GO:0016705">
    <property type="term" value="F:oxidoreductase activity, acting on paired donors, with incorporation or reduction of molecular oxygen"/>
    <property type="evidence" value="ECO:0007669"/>
    <property type="project" value="InterPro"/>
</dbReference>
<dbReference type="GO" id="GO:0016117">
    <property type="term" value="P:carotenoid biosynthetic process"/>
    <property type="evidence" value="ECO:0007669"/>
    <property type="project" value="UniProtKB-KW"/>
</dbReference>
<dbReference type="FunFam" id="3.50.50.60:FF:000101">
    <property type="entry name" value="lycopene epsilon cyclase, chloroplastic"/>
    <property type="match status" value="1"/>
</dbReference>
<dbReference type="Gene3D" id="3.50.50.60">
    <property type="entry name" value="FAD/NAD(P)-binding domain"/>
    <property type="match status" value="1"/>
</dbReference>
<dbReference type="InterPro" id="IPR036188">
    <property type="entry name" value="FAD/NAD-bd_sf"/>
</dbReference>
<dbReference type="InterPro" id="IPR010108">
    <property type="entry name" value="Lycopene_cyclase_b/e"/>
</dbReference>
<dbReference type="NCBIfam" id="TIGR01790">
    <property type="entry name" value="carotene-cycl"/>
    <property type="match status" value="1"/>
</dbReference>
<dbReference type="PANTHER" id="PTHR39757">
    <property type="match status" value="1"/>
</dbReference>
<dbReference type="PANTHER" id="PTHR39757:SF9">
    <property type="entry name" value="CAPSANTHIN_CAPSORUBIN SYNTHASE, CHROMOPLAST PROTEIN"/>
    <property type="match status" value="1"/>
</dbReference>
<dbReference type="Pfam" id="PF05834">
    <property type="entry name" value="Lycopene_cycl"/>
    <property type="match status" value="1"/>
</dbReference>
<dbReference type="SUPFAM" id="SSF51905">
    <property type="entry name" value="FAD/NAD(P)-binding domain"/>
    <property type="match status" value="1"/>
</dbReference>
<gene>
    <name type="primary">CCS</name>
</gene>
<proteinExistence type="inferred from homology"/>
<evidence type="ECO:0000250" key="1"/>
<evidence type="ECO:0000255" key="2"/>
<evidence type="ECO:0000305" key="3"/>
<sequence length="503" mass="56663">MATLLSPFSPSPLAKVSQIIDSTSSPSFSLFPLGRQNACSRKADHHHHHRIRTSKFGNFLELTPESVPEFLDFDLPWFHPSDRIRYDVIIIGTGPAGLRLAEQVSSRHSVKVCCVDPSPLSTWPNNYGVWVDEFEDIGLVDCLDKTWPMTCVFINDHKTKYLDRPYGRVSRNILKTKLLENCVSNGVKFHKAKVWHVNHQEFESSIVCDDGNEIKASLIVDASGFASSFVEYDKPRNHGYQIAHGILAEVESHPFDLDKMVLMDWRDSHLGNEPYLRASNLKLPTFLYAMPFDSNLVFLEETSLVSRPVLSYKEVKSRMAARLRHMGIRVKRVIEDEKCLIPMGGPLPVIPQSVMAIGGTSGLIHPATGYMVARTMALAPALADAIAECLGSTRMIRGRPLHQKVWNGLWPIDRRCNREFYSFGMETLLKLDLKGTRRFFDAFFDLNPYYWHGFLSSRLSLAELAGLSLSLFGHASNSSRLDIVTKCPVPLVKMMGNLALETI</sequence>
<accession>Q9SEA0</accession>
<keyword id="KW-0125">Carotenoid biosynthesis</keyword>
<keyword id="KW-0957">Chromoplast</keyword>
<keyword id="KW-0413">Isomerase</keyword>
<keyword id="KW-0520">NAD</keyword>
<keyword id="KW-0560">Oxidoreductase</keyword>
<keyword id="KW-0934">Plastid</keyword>
<keyword id="KW-0809">Transit peptide</keyword>
<reference key="1">
    <citation type="journal article" date="2001" name="Shi Yan Sheng Wu Xue Bao">
        <title>Molecular cloning of full length capsanthin/capsorubin synthase homologous gene from orange (Citrus sinensis).</title>
        <authorList>
            <person name="Xu C.J."/>
            <person name="Chen D.M."/>
            <person name="Zhang S.L."/>
        </authorList>
    </citation>
    <scope>NUCLEOTIDE SEQUENCE [GENOMIC DNA]</scope>
</reference>
<protein>
    <recommendedName>
        <fullName>Capsanthin/capsorubin synthase, chromoplastic</fullName>
        <ecNumber>5.3.99.8</ecNumber>
    </recommendedName>
</protein>
<name>CCS_CITSI</name>